<dbReference type="EC" id="2.7.4.3" evidence="1"/>
<dbReference type="EMBL" id="CP001359">
    <property type="protein sequence ID" value="ACL65380.1"/>
    <property type="molecule type" value="Genomic_DNA"/>
</dbReference>
<dbReference type="RefSeq" id="WP_012633252.1">
    <property type="nucleotide sequence ID" value="NC_011891.1"/>
</dbReference>
<dbReference type="SMR" id="B8J881"/>
<dbReference type="KEGG" id="acp:A2cp1_2039"/>
<dbReference type="HOGENOM" id="CLU_032354_1_2_7"/>
<dbReference type="UniPathway" id="UPA00588">
    <property type="reaction ID" value="UER00649"/>
</dbReference>
<dbReference type="Proteomes" id="UP000007089">
    <property type="component" value="Chromosome"/>
</dbReference>
<dbReference type="GO" id="GO:0005737">
    <property type="term" value="C:cytoplasm"/>
    <property type="evidence" value="ECO:0007669"/>
    <property type="project" value="UniProtKB-SubCell"/>
</dbReference>
<dbReference type="GO" id="GO:0004017">
    <property type="term" value="F:adenylate kinase activity"/>
    <property type="evidence" value="ECO:0007669"/>
    <property type="project" value="UniProtKB-UniRule"/>
</dbReference>
<dbReference type="GO" id="GO:0005524">
    <property type="term" value="F:ATP binding"/>
    <property type="evidence" value="ECO:0007669"/>
    <property type="project" value="UniProtKB-UniRule"/>
</dbReference>
<dbReference type="GO" id="GO:0008270">
    <property type="term" value="F:zinc ion binding"/>
    <property type="evidence" value="ECO:0007669"/>
    <property type="project" value="UniProtKB-UniRule"/>
</dbReference>
<dbReference type="GO" id="GO:0044209">
    <property type="term" value="P:AMP salvage"/>
    <property type="evidence" value="ECO:0007669"/>
    <property type="project" value="UniProtKB-UniRule"/>
</dbReference>
<dbReference type="CDD" id="cd01428">
    <property type="entry name" value="ADK"/>
    <property type="match status" value="1"/>
</dbReference>
<dbReference type="FunFam" id="3.40.50.300:FF:000106">
    <property type="entry name" value="Adenylate kinase mitochondrial"/>
    <property type="match status" value="1"/>
</dbReference>
<dbReference type="Gene3D" id="3.40.50.300">
    <property type="entry name" value="P-loop containing nucleotide triphosphate hydrolases"/>
    <property type="match status" value="1"/>
</dbReference>
<dbReference type="HAMAP" id="MF_00235">
    <property type="entry name" value="Adenylate_kinase_Adk"/>
    <property type="match status" value="1"/>
</dbReference>
<dbReference type="InterPro" id="IPR006259">
    <property type="entry name" value="Adenyl_kin_sub"/>
</dbReference>
<dbReference type="InterPro" id="IPR000850">
    <property type="entry name" value="Adenylat/UMP-CMP_kin"/>
</dbReference>
<dbReference type="InterPro" id="IPR033690">
    <property type="entry name" value="Adenylat_kinase_CS"/>
</dbReference>
<dbReference type="InterPro" id="IPR007862">
    <property type="entry name" value="Adenylate_kinase_lid-dom"/>
</dbReference>
<dbReference type="InterPro" id="IPR027417">
    <property type="entry name" value="P-loop_NTPase"/>
</dbReference>
<dbReference type="NCBIfam" id="TIGR01351">
    <property type="entry name" value="adk"/>
    <property type="match status" value="1"/>
</dbReference>
<dbReference type="NCBIfam" id="NF001380">
    <property type="entry name" value="PRK00279.1-2"/>
    <property type="match status" value="1"/>
</dbReference>
<dbReference type="NCBIfam" id="NF001381">
    <property type="entry name" value="PRK00279.1-3"/>
    <property type="match status" value="1"/>
</dbReference>
<dbReference type="NCBIfam" id="NF011100">
    <property type="entry name" value="PRK14527.1"/>
    <property type="match status" value="1"/>
</dbReference>
<dbReference type="PANTHER" id="PTHR23359">
    <property type="entry name" value="NUCLEOTIDE KINASE"/>
    <property type="match status" value="1"/>
</dbReference>
<dbReference type="Pfam" id="PF00406">
    <property type="entry name" value="ADK"/>
    <property type="match status" value="1"/>
</dbReference>
<dbReference type="Pfam" id="PF05191">
    <property type="entry name" value="ADK_lid"/>
    <property type="match status" value="1"/>
</dbReference>
<dbReference type="PRINTS" id="PR00094">
    <property type="entry name" value="ADENYLTKNASE"/>
</dbReference>
<dbReference type="SUPFAM" id="SSF52540">
    <property type="entry name" value="P-loop containing nucleoside triphosphate hydrolases"/>
    <property type="match status" value="1"/>
</dbReference>
<dbReference type="PROSITE" id="PS00113">
    <property type="entry name" value="ADENYLATE_KINASE"/>
    <property type="match status" value="1"/>
</dbReference>
<sequence length="214" mass="23555">MILILLGPPGAGKGTQAKLLSSELGIPHISTGDMFRDHKARGTEIGKQVQAIMDAGGLVTDDITNAMVKERLSRPDVAPGFILDGYPRTVVQAEYLDGLLRSLGRSIDRALSYEVPEELVVERISGRRSCPRCGAVYHVSQNPPHRAGFCDRDDAALVQREDDKPENVRKRMQEYGTKTEPLKRYYRDRGELSDVEGVGTPEGILAVTKKVLGR</sequence>
<reference key="1">
    <citation type="submission" date="2009-01" db="EMBL/GenBank/DDBJ databases">
        <title>Complete sequence of Anaeromyxobacter dehalogenans 2CP-1.</title>
        <authorList>
            <person name="Lucas S."/>
            <person name="Copeland A."/>
            <person name="Lapidus A."/>
            <person name="Glavina del Rio T."/>
            <person name="Dalin E."/>
            <person name="Tice H."/>
            <person name="Bruce D."/>
            <person name="Goodwin L."/>
            <person name="Pitluck S."/>
            <person name="Saunders E."/>
            <person name="Brettin T."/>
            <person name="Detter J.C."/>
            <person name="Han C."/>
            <person name="Larimer F."/>
            <person name="Land M."/>
            <person name="Hauser L."/>
            <person name="Kyrpides N."/>
            <person name="Ovchinnikova G."/>
            <person name="Beliaev A.S."/>
            <person name="Richardson P."/>
        </authorList>
    </citation>
    <scope>NUCLEOTIDE SEQUENCE [LARGE SCALE GENOMIC DNA]</scope>
    <source>
        <strain>2CP-1 / ATCC BAA-258</strain>
    </source>
</reference>
<name>KAD_ANAD2</name>
<proteinExistence type="inferred from homology"/>
<comment type="function">
    <text evidence="1">Catalyzes the reversible transfer of the terminal phosphate group between ATP and AMP. Plays an important role in cellular energy homeostasis and in adenine nucleotide metabolism.</text>
</comment>
<comment type="catalytic activity">
    <reaction evidence="1">
        <text>AMP + ATP = 2 ADP</text>
        <dbReference type="Rhea" id="RHEA:12973"/>
        <dbReference type="ChEBI" id="CHEBI:30616"/>
        <dbReference type="ChEBI" id="CHEBI:456215"/>
        <dbReference type="ChEBI" id="CHEBI:456216"/>
        <dbReference type="EC" id="2.7.4.3"/>
    </reaction>
</comment>
<comment type="pathway">
    <text evidence="1">Purine metabolism; AMP biosynthesis via salvage pathway; AMP from ADP: step 1/1.</text>
</comment>
<comment type="subunit">
    <text evidence="1">Monomer.</text>
</comment>
<comment type="subcellular location">
    <subcellularLocation>
        <location evidence="1">Cytoplasm</location>
    </subcellularLocation>
</comment>
<comment type="domain">
    <text evidence="1">Consists of three domains, a large central CORE domain and two small peripheral domains, NMPbind and LID, which undergo movements during catalysis. The LID domain closes over the site of phosphoryl transfer upon ATP binding. Assembling and dissambling the active center during each catalytic cycle provides an effective means to prevent ATP hydrolysis. Some bacteria have evolved a zinc-coordinating structure that stabilizes the LID domain.</text>
</comment>
<comment type="similarity">
    <text evidence="1">Belongs to the adenylate kinase family.</text>
</comment>
<protein>
    <recommendedName>
        <fullName evidence="1">Adenylate kinase</fullName>
        <shortName evidence="1">AK</shortName>
        <ecNumber evidence="1">2.7.4.3</ecNumber>
    </recommendedName>
    <alternativeName>
        <fullName evidence="1">ATP-AMP transphosphorylase</fullName>
    </alternativeName>
    <alternativeName>
        <fullName evidence="1">ATP:AMP phosphotransferase</fullName>
    </alternativeName>
    <alternativeName>
        <fullName evidence="1">Adenylate monophosphate kinase</fullName>
    </alternativeName>
</protein>
<gene>
    <name evidence="1" type="primary">adk</name>
    <name type="ordered locus">A2cp1_2039</name>
</gene>
<organism>
    <name type="scientific">Anaeromyxobacter dehalogenans (strain 2CP-1 / ATCC BAA-258)</name>
    <dbReference type="NCBI Taxonomy" id="455488"/>
    <lineage>
        <taxon>Bacteria</taxon>
        <taxon>Pseudomonadati</taxon>
        <taxon>Myxococcota</taxon>
        <taxon>Myxococcia</taxon>
        <taxon>Myxococcales</taxon>
        <taxon>Cystobacterineae</taxon>
        <taxon>Anaeromyxobacteraceae</taxon>
        <taxon>Anaeromyxobacter</taxon>
    </lineage>
</organism>
<keyword id="KW-0067">ATP-binding</keyword>
<keyword id="KW-0963">Cytoplasm</keyword>
<keyword id="KW-0418">Kinase</keyword>
<keyword id="KW-0479">Metal-binding</keyword>
<keyword id="KW-0545">Nucleotide biosynthesis</keyword>
<keyword id="KW-0547">Nucleotide-binding</keyword>
<keyword id="KW-0808">Transferase</keyword>
<keyword id="KW-0862">Zinc</keyword>
<evidence type="ECO:0000255" key="1">
    <source>
        <dbReference type="HAMAP-Rule" id="MF_00235"/>
    </source>
</evidence>
<feature type="chain" id="PRO_1000191119" description="Adenylate kinase">
    <location>
        <begin position="1"/>
        <end position="214"/>
    </location>
</feature>
<feature type="region of interest" description="NMP" evidence="1">
    <location>
        <begin position="30"/>
        <end position="59"/>
    </location>
</feature>
<feature type="region of interest" description="LID" evidence="1">
    <location>
        <begin position="126"/>
        <end position="163"/>
    </location>
</feature>
<feature type="binding site" evidence="1">
    <location>
        <begin position="10"/>
        <end position="15"/>
    </location>
    <ligand>
        <name>ATP</name>
        <dbReference type="ChEBI" id="CHEBI:30616"/>
    </ligand>
</feature>
<feature type="binding site" evidence="1">
    <location>
        <position position="31"/>
    </location>
    <ligand>
        <name>AMP</name>
        <dbReference type="ChEBI" id="CHEBI:456215"/>
    </ligand>
</feature>
<feature type="binding site" evidence="1">
    <location>
        <position position="36"/>
    </location>
    <ligand>
        <name>AMP</name>
        <dbReference type="ChEBI" id="CHEBI:456215"/>
    </ligand>
</feature>
<feature type="binding site" evidence="1">
    <location>
        <begin position="57"/>
        <end position="59"/>
    </location>
    <ligand>
        <name>AMP</name>
        <dbReference type="ChEBI" id="CHEBI:456215"/>
    </ligand>
</feature>
<feature type="binding site" evidence="1">
    <location>
        <begin position="85"/>
        <end position="88"/>
    </location>
    <ligand>
        <name>AMP</name>
        <dbReference type="ChEBI" id="CHEBI:456215"/>
    </ligand>
</feature>
<feature type="binding site" evidence="1">
    <location>
        <position position="92"/>
    </location>
    <ligand>
        <name>AMP</name>
        <dbReference type="ChEBI" id="CHEBI:456215"/>
    </ligand>
</feature>
<feature type="binding site" evidence="1">
    <location>
        <position position="127"/>
    </location>
    <ligand>
        <name>ATP</name>
        <dbReference type="ChEBI" id="CHEBI:30616"/>
    </ligand>
</feature>
<feature type="binding site" evidence="1">
    <location>
        <position position="130"/>
    </location>
    <ligand>
        <name>Zn(2+)</name>
        <dbReference type="ChEBI" id="CHEBI:29105"/>
        <note>structural</note>
    </ligand>
</feature>
<feature type="binding site" evidence="1">
    <location>
        <position position="133"/>
    </location>
    <ligand>
        <name>Zn(2+)</name>
        <dbReference type="ChEBI" id="CHEBI:29105"/>
        <note>structural</note>
    </ligand>
</feature>
<feature type="binding site" evidence="1">
    <location>
        <begin position="136"/>
        <end position="137"/>
    </location>
    <ligand>
        <name>ATP</name>
        <dbReference type="ChEBI" id="CHEBI:30616"/>
    </ligand>
</feature>
<feature type="binding site" evidence="1">
    <location>
        <position position="150"/>
    </location>
    <ligand>
        <name>Zn(2+)</name>
        <dbReference type="ChEBI" id="CHEBI:29105"/>
        <note>structural</note>
    </ligand>
</feature>
<feature type="binding site" evidence="1">
    <location>
        <position position="153"/>
    </location>
    <ligand>
        <name>Zn(2+)</name>
        <dbReference type="ChEBI" id="CHEBI:29105"/>
        <note>structural</note>
    </ligand>
</feature>
<feature type="binding site" evidence="1">
    <location>
        <position position="160"/>
    </location>
    <ligand>
        <name>AMP</name>
        <dbReference type="ChEBI" id="CHEBI:456215"/>
    </ligand>
</feature>
<feature type="binding site" evidence="1">
    <location>
        <position position="171"/>
    </location>
    <ligand>
        <name>AMP</name>
        <dbReference type="ChEBI" id="CHEBI:456215"/>
    </ligand>
</feature>
<feature type="binding site" evidence="1">
    <location>
        <position position="199"/>
    </location>
    <ligand>
        <name>ATP</name>
        <dbReference type="ChEBI" id="CHEBI:30616"/>
    </ligand>
</feature>
<accession>B8J881</accession>